<accession>P02744</accession>
<name>LIMU_LIMPO</name>
<protein>
    <recommendedName>
        <fullName>Limulin</fullName>
    </recommendedName>
</protein>
<organism>
    <name type="scientific">Limulus polyphemus</name>
    <name type="common">Atlantic horseshoe crab</name>
    <dbReference type="NCBI Taxonomy" id="6850"/>
    <lineage>
        <taxon>Eukaryota</taxon>
        <taxon>Metazoa</taxon>
        <taxon>Ecdysozoa</taxon>
        <taxon>Arthropoda</taxon>
        <taxon>Chelicerata</taxon>
        <taxon>Merostomata</taxon>
        <taxon>Xiphosura</taxon>
        <taxon>Limulidae</taxon>
        <taxon>Limulus</taxon>
    </lineage>
</organism>
<keyword id="KW-0930">Antiviral protein</keyword>
<keyword id="KW-0106">Calcium</keyword>
<keyword id="KW-0903">Direct protein sequencing</keyword>
<keyword id="KW-1015">Disulfide bond</keyword>
<keyword id="KW-0430">Lectin</keyword>
<keyword id="KW-0479">Metal-binding</keyword>
<evidence type="ECO:0000255" key="1"/>
<evidence type="ECO:0000255" key="2">
    <source>
        <dbReference type="PROSITE-ProRule" id="PRU01172"/>
    </source>
</evidence>
<evidence type="ECO:0000269" key="3">
    <source>
    </source>
</evidence>
<evidence type="ECO:0000269" key="4">
    <source>
    </source>
</evidence>
<evidence type="ECO:0000305" key="5"/>
<feature type="chain" id="PRO_0000162503" description="Limulin">
    <location>
        <begin position="1"/>
        <end position="84" status="greater than"/>
    </location>
</feature>
<feature type="domain" description="Pentraxin (PTX)" evidence="2">
    <location>
        <begin position="6"/>
        <end position="84" status="greater than"/>
    </location>
</feature>
<feature type="binding site" evidence="1">
    <location>
        <position position="67"/>
    </location>
    <ligand>
        <name>Ca(2+)</name>
        <dbReference type="ChEBI" id="CHEBI:29108"/>
        <label>1</label>
    </ligand>
</feature>
<feature type="binding site" evidence="1">
    <location>
        <position position="68"/>
    </location>
    <ligand>
        <name>Ca(2+)</name>
        <dbReference type="ChEBI" id="CHEBI:29108"/>
        <label>1</label>
    </ligand>
</feature>
<feature type="disulfide bond">
    <location>
        <begin position="38"/>
        <end status="unknown"/>
    </location>
</feature>
<feature type="non-terminal residue">
    <location>
        <position position="84"/>
    </location>
</feature>
<sequence length="84" mass="9530">LEEGEITSKVKFPPSSSPSFPRLVMVGTLPDLQEITLCYWFKVNQLKGTLGHSRVLBMFSYATAKKDNELLTFLDEQGDFLFNV</sequence>
<reference key="1">
    <citation type="journal article" date="1977" name="Biochemistry">
        <title>Molecular characterization of limulin, a sialic acid binding lectin from the hemolymph of the horseshoe crab, Limulus polyphemus.</title>
        <authorList>
            <person name="Kaplan R."/>
            <person name="Li S.S.-L."/>
            <person name="Kehoe J.M."/>
        </authorList>
    </citation>
    <scope>PROTEIN SEQUENCE</scope>
    <scope>FUNCTION</scope>
</reference>
<reference key="2">
    <citation type="journal article" date="1995" name="Res. Virol.">
        <title>Inhibition of herpes simplex, rabies and rubella viruses by lectins with different specificities.</title>
        <authorList>
            <person name="Marchetti M."/>
            <person name="Mastromarino P."/>
            <person name="Rieti S."/>
            <person name="Seganti L."/>
            <person name="Orsi N."/>
        </authorList>
    </citation>
    <scope>FUNCTION</scope>
</reference>
<proteinExistence type="evidence at protein level"/>
<dbReference type="PIR" id="A03204">
    <property type="entry name" value="LSHC"/>
</dbReference>
<dbReference type="Proteomes" id="UP000694941">
    <property type="component" value="Unplaced"/>
</dbReference>
<dbReference type="GO" id="GO:0030246">
    <property type="term" value="F:carbohydrate binding"/>
    <property type="evidence" value="ECO:0007669"/>
    <property type="project" value="UniProtKB-KW"/>
</dbReference>
<dbReference type="GO" id="GO:0046872">
    <property type="term" value="F:metal ion binding"/>
    <property type="evidence" value="ECO:0007669"/>
    <property type="project" value="UniProtKB-KW"/>
</dbReference>
<dbReference type="GO" id="GO:0050688">
    <property type="term" value="P:regulation of defense response to virus"/>
    <property type="evidence" value="ECO:0007669"/>
    <property type="project" value="UniProtKB-KW"/>
</dbReference>
<dbReference type="Gene3D" id="2.60.120.200">
    <property type="match status" value="1"/>
</dbReference>
<dbReference type="InterPro" id="IPR013320">
    <property type="entry name" value="ConA-like_dom_sf"/>
</dbReference>
<dbReference type="InterPro" id="IPR001759">
    <property type="entry name" value="Pentraxin-related"/>
</dbReference>
<dbReference type="Pfam" id="PF00354">
    <property type="entry name" value="Pentaxin"/>
    <property type="match status" value="1"/>
</dbReference>
<dbReference type="SUPFAM" id="SSF49899">
    <property type="entry name" value="Concanavalin A-like lectins/glucanases"/>
    <property type="match status" value="1"/>
</dbReference>
<dbReference type="PROSITE" id="PS51828">
    <property type="entry name" value="PTX_2"/>
    <property type="match status" value="1"/>
</dbReference>
<comment type="function">
    <text evidence="3 4">Lectin that binds sialic acid (PubMed:409430). Displays antiviral activity and therefore may contribute to defense against infections (PubMed:7481093).</text>
</comment>
<comment type="cofactor">
    <cofactor evidence="5">
        <name>Ca(2+)</name>
        <dbReference type="ChEBI" id="CHEBI:29108"/>
    </cofactor>
    <text evidence="5">Binds 2 calcium ions per subunit.</text>
</comment>
<comment type="subunit">
    <text>Homopentamer. Pentraxin (or pentaxin) have a discoid arrangement of 5 non-covalently bound subunits.</text>
</comment>
<comment type="domain">
    <text>A possible carbohydrate binding site is located between positions 14 and 20.</text>
</comment>
<comment type="PTM">
    <text>A disulfide bond links Cys-38 to a Cys in the C-terminal half of the chain of 163 residues.</text>
</comment>
<comment type="miscellaneous">
    <text evidence="4">Displays strong antiviral activity against the rubella virus (MIC=7.2 ug/ml), and relatively weak activity against herpes simplex virus type 1 (MIC=44 ug/ml) and the rabies virus (MIC=32 ug/ml).</text>
</comment>
<comment type="similarity">
    <text evidence="5">Belongs to the pentraxin family.</text>
</comment>